<comment type="subunit">
    <text>Part of the 30S ribosomal subunit.</text>
</comment>
<comment type="subcellular location">
    <subcellularLocation>
        <location>Plastid</location>
        <location>Chloroplast</location>
    </subcellularLocation>
</comment>
<comment type="similarity">
    <text evidence="1">Belongs to the bacterial ribosomal protein bS18 family.</text>
</comment>
<accession>Q85FK0</accession>
<reference key="1">
    <citation type="journal article" date="2003" name="DNA Res.">
        <title>Complete nucleotide sequence of the chloroplast genome from a leptosporangiate fern, Adiantum capillus-veneris L.</title>
        <authorList>
            <person name="Wolf P.G."/>
            <person name="Rowe C.A."/>
            <person name="Sinclair R.B."/>
            <person name="Hasebe M."/>
        </authorList>
    </citation>
    <scope>NUCLEOTIDE SEQUENCE [LARGE SCALE GENOMIC DNA]</scope>
</reference>
<reference key="2">
    <citation type="journal article" date="2004" name="Gene">
        <title>High levels of RNA editing in a vascular plant chloroplast genome: analysis of transcripts from the fern Adiantum capillus-veneris.</title>
        <authorList>
            <person name="Wolf P.G."/>
            <person name="Rowe C.A."/>
            <person name="Hasebe M."/>
        </authorList>
    </citation>
    <scope>NUCLEOTIDE SEQUENCE [GENOMIC DNA]</scope>
    <scope>ABSENCE OF RNA EDITING</scope>
    <source>
        <tissue>Frond</tissue>
    </source>
</reference>
<evidence type="ECO:0000255" key="1">
    <source>
        <dbReference type="HAMAP-Rule" id="MF_00270"/>
    </source>
</evidence>
<evidence type="ECO:0000305" key="2"/>
<dbReference type="EMBL" id="AY178864">
    <property type="protein sequence ID" value="AAP29413.1"/>
    <property type="molecule type" value="Genomic_DNA"/>
</dbReference>
<dbReference type="RefSeq" id="NP_848082.1">
    <property type="nucleotide sequence ID" value="NC_004766.1"/>
</dbReference>
<dbReference type="SMR" id="Q85FK0"/>
<dbReference type="GeneID" id="807435"/>
<dbReference type="GO" id="GO:0009507">
    <property type="term" value="C:chloroplast"/>
    <property type="evidence" value="ECO:0007669"/>
    <property type="project" value="UniProtKB-SubCell"/>
</dbReference>
<dbReference type="GO" id="GO:0005763">
    <property type="term" value="C:mitochondrial small ribosomal subunit"/>
    <property type="evidence" value="ECO:0007669"/>
    <property type="project" value="TreeGrafter"/>
</dbReference>
<dbReference type="GO" id="GO:0070181">
    <property type="term" value="F:small ribosomal subunit rRNA binding"/>
    <property type="evidence" value="ECO:0007669"/>
    <property type="project" value="TreeGrafter"/>
</dbReference>
<dbReference type="GO" id="GO:0003735">
    <property type="term" value="F:structural constituent of ribosome"/>
    <property type="evidence" value="ECO:0007669"/>
    <property type="project" value="InterPro"/>
</dbReference>
<dbReference type="GO" id="GO:0006412">
    <property type="term" value="P:translation"/>
    <property type="evidence" value="ECO:0007669"/>
    <property type="project" value="UniProtKB-UniRule"/>
</dbReference>
<dbReference type="FunFam" id="4.10.640.10:FF:000002">
    <property type="entry name" value="30S ribosomal protein S18, chloroplastic"/>
    <property type="match status" value="1"/>
</dbReference>
<dbReference type="Gene3D" id="4.10.640.10">
    <property type="entry name" value="Ribosomal protein S18"/>
    <property type="match status" value="1"/>
</dbReference>
<dbReference type="HAMAP" id="MF_00270">
    <property type="entry name" value="Ribosomal_bS18"/>
    <property type="match status" value="1"/>
</dbReference>
<dbReference type="InterPro" id="IPR001648">
    <property type="entry name" value="Ribosomal_bS18"/>
</dbReference>
<dbReference type="InterPro" id="IPR018275">
    <property type="entry name" value="Ribosomal_bS18_CS"/>
</dbReference>
<dbReference type="InterPro" id="IPR036870">
    <property type="entry name" value="Ribosomal_bS18_sf"/>
</dbReference>
<dbReference type="NCBIfam" id="TIGR00165">
    <property type="entry name" value="S18"/>
    <property type="match status" value="1"/>
</dbReference>
<dbReference type="PANTHER" id="PTHR13479">
    <property type="entry name" value="30S RIBOSOMAL PROTEIN S18"/>
    <property type="match status" value="1"/>
</dbReference>
<dbReference type="PANTHER" id="PTHR13479:SF40">
    <property type="entry name" value="SMALL RIBOSOMAL SUBUNIT PROTEIN BS18M"/>
    <property type="match status" value="1"/>
</dbReference>
<dbReference type="Pfam" id="PF01084">
    <property type="entry name" value="Ribosomal_S18"/>
    <property type="match status" value="1"/>
</dbReference>
<dbReference type="PRINTS" id="PR00974">
    <property type="entry name" value="RIBOSOMALS18"/>
</dbReference>
<dbReference type="SUPFAM" id="SSF46911">
    <property type="entry name" value="Ribosomal protein S18"/>
    <property type="match status" value="1"/>
</dbReference>
<dbReference type="PROSITE" id="PS00057">
    <property type="entry name" value="RIBOSOMAL_S18"/>
    <property type="match status" value="1"/>
</dbReference>
<sequence length="75" mass="8787">MNKSRHSSRRRSPSIRSDETIDYKNTSLLRRFVSEQGKILSRRMNRLTSKQQRLIATAIKRARILALLPFSNNES</sequence>
<geneLocation type="chloroplast"/>
<gene>
    <name evidence="1" type="primary">rps18</name>
</gene>
<keyword id="KW-0150">Chloroplast</keyword>
<keyword id="KW-0934">Plastid</keyword>
<keyword id="KW-0687">Ribonucleoprotein</keyword>
<keyword id="KW-0689">Ribosomal protein</keyword>
<keyword id="KW-0694">RNA-binding</keyword>
<keyword id="KW-0699">rRNA-binding</keyword>
<protein>
    <recommendedName>
        <fullName evidence="1">Small ribosomal subunit protein bS18c</fullName>
    </recommendedName>
    <alternativeName>
        <fullName evidence="2">30S ribosomal protein S18, chloroplastic</fullName>
    </alternativeName>
</protein>
<organism>
    <name type="scientific">Adiantum capillus-veneris</name>
    <name type="common">Maidenhair fern</name>
    <dbReference type="NCBI Taxonomy" id="13818"/>
    <lineage>
        <taxon>Eukaryota</taxon>
        <taxon>Viridiplantae</taxon>
        <taxon>Streptophyta</taxon>
        <taxon>Embryophyta</taxon>
        <taxon>Tracheophyta</taxon>
        <taxon>Polypodiopsida</taxon>
        <taxon>Polypodiidae</taxon>
        <taxon>Polypodiales</taxon>
        <taxon>Pteridineae</taxon>
        <taxon>Pteridaceae</taxon>
        <taxon>Vittarioideae</taxon>
        <taxon>Adiantum</taxon>
    </lineage>
</organism>
<feature type="chain" id="PRO_0000111273" description="Small ribosomal subunit protein bS18c">
    <location>
        <begin position="1"/>
        <end position="75"/>
    </location>
</feature>
<proteinExistence type="evidence at transcript level"/>
<name>RR18_ADICA</name>